<protein>
    <recommendedName>
        <fullName evidence="1">Maturase K</fullName>
    </recommendedName>
    <alternativeName>
        <fullName evidence="1">Intron maturase</fullName>
    </alternativeName>
</protein>
<reference key="1">
    <citation type="journal article" date="2003" name="Bot. J. Linn. Soc.">
        <title>Phylogenetic analysis of Magnoliales and Myristicaceae based on multiple data sets: implications for character evolution.</title>
        <authorList>
            <person name="Sauquet H."/>
            <person name="Doyle J.A."/>
            <person name="Scharaschkin T."/>
            <person name="Borsch T."/>
            <person name="Hilu K.W."/>
            <person name="Chatrou L.W."/>
            <person name="Le Thomas A."/>
        </authorList>
    </citation>
    <scope>NUCLEOTIDE SEQUENCE [GENOMIC DNA]</scope>
</reference>
<evidence type="ECO:0000255" key="1">
    <source>
        <dbReference type="HAMAP-Rule" id="MF_01390"/>
    </source>
</evidence>
<accession>Q7YM28</accession>
<dbReference type="EMBL" id="AY220441">
    <property type="protein sequence ID" value="AAP02924.1"/>
    <property type="molecule type" value="Genomic_DNA"/>
</dbReference>
<dbReference type="GO" id="GO:0009507">
    <property type="term" value="C:chloroplast"/>
    <property type="evidence" value="ECO:0007669"/>
    <property type="project" value="UniProtKB-SubCell"/>
</dbReference>
<dbReference type="GO" id="GO:0003723">
    <property type="term" value="F:RNA binding"/>
    <property type="evidence" value="ECO:0007669"/>
    <property type="project" value="UniProtKB-KW"/>
</dbReference>
<dbReference type="GO" id="GO:0006397">
    <property type="term" value="P:mRNA processing"/>
    <property type="evidence" value="ECO:0007669"/>
    <property type="project" value="UniProtKB-KW"/>
</dbReference>
<dbReference type="GO" id="GO:0008380">
    <property type="term" value="P:RNA splicing"/>
    <property type="evidence" value="ECO:0007669"/>
    <property type="project" value="UniProtKB-UniRule"/>
</dbReference>
<dbReference type="GO" id="GO:0008033">
    <property type="term" value="P:tRNA processing"/>
    <property type="evidence" value="ECO:0007669"/>
    <property type="project" value="UniProtKB-KW"/>
</dbReference>
<dbReference type="HAMAP" id="MF_01390">
    <property type="entry name" value="MatK"/>
    <property type="match status" value="1"/>
</dbReference>
<dbReference type="InterPro" id="IPR024937">
    <property type="entry name" value="Domain_X"/>
</dbReference>
<dbReference type="InterPro" id="IPR002866">
    <property type="entry name" value="Maturase_MatK"/>
</dbReference>
<dbReference type="InterPro" id="IPR024942">
    <property type="entry name" value="Maturase_MatK_N"/>
</dbReference>
<dbReference type="PANTHER" id="PTHR34811">
    <property type="entry name" value="MATURASE K"/>
    <property type="match status" value="1"/>
</dbReference>
<dbReference type="PANTHER" id="PTHR34811:SF1">
    <property type="entry name" value="MATURASE K"/>
    <property type="match status" value="1"/>
</dbReference>
<dbReference type="Pfam" id="PF01348">
    <property type="entry name" value="Intron_maturas2"/>
    <property type="match status" value="1"/>
</dbReference>
<dbReference type="Pfam" id="PF01824">
    <property type="entry name" value="MatK_N"/>
    <property type="match status" value="1"/>
</dbReference>
<proteinExistence type="inferred from homology"/>
<sequence length="509" mass="60314">MEELQGYLEIDRSRQQHFLYPLLFQEYIYALAHDHGLNGSIFYEPMENLGYDNKSSSLIAKRLITRMHQQNHLIISISVNDSKQNRFVGHNKNLYSQMVSEGFAVIVEIPFSLRLVSSLEEKEIEKSHNLRSIHSIFPFFEDKLSHLNHVSDILIPHPIHLEILVQTLRCWVQDAPSLHLLRFFLHEYGNSNSLITPKKSISFFSKENQRFFLFLYNSHVYECESVFVFLRKPFSHLRSTSFGAFLERIHFYGKTEHLVVVPRNYFQKTLWLFKDPFMHYARYQGKSILASKGTHLLMKKWKSHLVHFWQYHFYLWSQPDRIHINQLCNHSFYFLGYFSSVRLNLSVVRSEMLENSFLIDTSIKKFETLAPIIPLIGSLAKAKFCNVSGHPISKSVWANSSDSDILNRFGRIYRNLSHYHSGSSKKQILYRIKYILRLSCARTLARKHKSTVRTFLKRLGSEFLEEFLTEEEQVLSLIFPRTSFPFYRSHRERIWYLDIIRINDLANHE</sequence>
<name>MATK_GALBE</name>
<gene>
    <name evidence="1" type="primary">matK</name>
</gene>
<organism>
    <name type="scientific">Galbulimima belgraveana</name>
    <name type="common">Northern pigeonberry ash</name>
    <name type="synonym">Eupomatia belgraveana</name>
    <dbReference type="NCBI Taxonomy" id="13535"/>
    <lineage>
        <taxon>Eukaryota</taxon>
        <taxon>Viridiplantae</taxon>
        <taxon>Streptophyta</taxon>
        <taxon>Embryophyta</taxon>
        <taxon>Tracheophyta</taxon>
        <taxon>Spermatophyta</taxon>
        <taxon>Magnoliopsida</taxon>
        <taxon>Magnoliidae</taxon>
        <taxon>Magnoliales</taxon>
        <taxon>Himantandraceae</taxon>
        <taxon>Galbulimima</taxon>
    </lineage>
</organism>
<feature type="chain" id="PRO_0000143396" description="Maturase K">
    <location>
        <begin position="1"/>
        <end position="509"/>
    </location>
</feature>
<keyword id="KW-0150">Chloroplast</keyword>
<keyword id="KW-0507">mRNA processing</keyword>
<keyword id="KW-0934">Plastid</keyword>
<keyword id="KW-0694">RNA-binding</keyword>
<keyword id="KW-0819">tRNA processing</keyword>
<geneLocation type="chloroplast"/>
<comment type="function">
    <text evidence="1">Usually encoded in the trnK tRNA gene intron. Probably assists in splicing its own and other chloroplast group II introns.</text>
</comment>
<comment type="subcellular location">
    <subcellularLocation>
        <location>Plastid</location>
        <location>Chloroplast</location>
    </subcellularLocation>
</comment>
<comment type="similarity">
    <text evidence="1">Belongs to the intron maturase 2 family. MatK subfamily.</text>
</comment>